<keyword id="KW-0539">Nucleus</keyword>
<keyword id="KW-0611">Plant defense</keyword>
<keyword id="KW-1185">Reference proteome</keyword>
<reference key="1">
    <citation type="journal article" date="2000" name="Nature">
        <title>Sequence and analysis of chromosome 1 of the plant Arabidopsis thaliana.</title>
        <authorList>
            <person name="Theologis A."/>
            <person name="Ecker J.R."/>
            <person name="Palm C.J."/>
            <person name="Federspiel N.A."/>
            <person name="Kaul S."/>
            <person name="White O."/>
            <person name="Alonso J."/>
            <person name="Altafi H."/>
            <person name="Araujo R."/>
            <person name="Bowman C.L."/>
            <person name="Brooks S.Y."/>
            <person name="Buehler E."/>
            <person name="Chan A."/>
            <person name="Chao Q."/>
            <person name="Chen H."/>
            <person name="Cheuk R.F."/>
            <person name="Chin C.W."/>
            <person name="Chung M.K."/>
            <person name="Conn L."/>
            <person name="Conway A.B."/>
            <person name="Conway A.R."/>
            <person name="Creasy T.H."/>
            <person name="Dewar K."/>
            <person name="Dunn P."/>
            <person name="Etgu P."/>
            <person name="Feldblyum T.V."/>
            <person name="Feng J.-D."/>
            <person name="Fong B."/>
            <person name="Fujii C.Y."/>
            <person name="Gill J.E."/>
            <person name="Goldsmith A.D."/>
            <person name="Haas B."/>
            <person name="Hansen N.F."/>
            <person name="Hughes B."/>
            <person name="Huizar L."/>
            <person name="Hunter J.L."/>
            <person name="Jenkins J."/>
            <person name="Johnson-Hopson C."/>
            <person name="Khan S."/>
            <person name="Khaykin E."/>
            <person name="Kim C.J."/>
            <person name="Koo H.L."/>
            <person name="Kremenetskaia I."/>
            <person name="Kurtz D.B."/>
            <person name="Kwan A."/>
            <person name="Lam B."/>
            <person name="Langin-Hooper S."/>
            <person name="Lee A."/>
            <person name="Lee J.M."/>
            <person name="Lenz C.A."/>
            <person name="Li J.H."/>
            <person name="Li Y.-P."/>
            <person name="Lin X."/>
            <person name="Liu S.X."/>
            <person name="Liu Z.A."/>
            <person name="Luros J.S."/>
            <person name="Maiti R."/>
            <person name="Marziali A."/>
            <person name="Militscher J."/>
            <person name="Miranda M."/>
            <person name="Nguyen M."/>
            <person name="Nierman W.C."/>
            <person name="Osborne B.I."/>
            <person name="Pai G."/>
            <person name="Peterson J."/>
            <person name="Pham P.K."/>
            <person name="Rizzo M."/>
            <person name="Rooney T."/>
            <person name="Rowley D."/>
            <person name="Sakano H."/>
            <person name="Salzberg S.L."/>
            <person name="Schwartz J.R."/>
            <person name="Shinn P."/>
            <person name="Southwick A.M."/>
            <person name="Sun H."/>
            <person name="Tallon L.J."/>
            <person name="Tambunga G."/>
            <person name="Toriumi M.J."/>
            <person name="Town C.D."/>
            <person name="Utterback T."/>
            <person name="Van Aken S."/>
            <person name="Vaysberg M."/>
            <person name="Vysotskaia V.S."/>
            <person name="Walker M."/>
            <person name="Wu D."/>
            <person name="Yu G."/>
            <person name="Fraser C.M."/>
            <person name="Venter J.C."/>
            <person name="Davis R.W."/>
        </authorList>
    </citation>
    <scope>NUCLEOTIDE SEQUENCE [LARGE SCALE GENOMIC DNA]</scope>
    <source>
        <strain>cv. Columbia</strain>
    </source>
</reference>
<reference key="2">
    <citation type="journal article" date="2017" name="Plant J.">
        <title>Araport11: a complete reannotation of the Arabidopsis thaliana reference genome.</title>
        <authorList>
            <person name="Cheng C.Y."/>
            <person name="Krishnakumar V."/>
            <person name="Chan A.P."/>
            <person name="Thibaud-Nissen F."/>
            <person name="Schobel S."/>
            <person name="Town C.D."/>
        </authorList>
    </citation>
    <scope>GENOME REANNOTATION</scope>
    <source>
        <strain>cv. Columbia</strain>
    </source>
</reference>
<reference key="3">
    <citation type="journal article" date="2012" name="Plant Physiol.">
        <title>Structural and functional analysis of VQ motif-containing proteins in Arabidopsis as interacting proteins of WRKY transcription factors.</title>
        <authorList>
            <person name="Cheng Y."/>
            <person name="Zhou Y."/>
            <person name="Yang Y."/>
            <person name="Chi Y.J."/>
            <person name="Zhou J."/>
            <person name="Chen J.Y."/>
            <person name="Wang F."/>
            <person name="Fan B."/>
            <person name="Shi K."/>
            <person name="Zhou Y.H."/>
            <person name="Yu J.Q."/>
            <person name="Chen Z."/>
        </authorList>
    </citation>
    <scope>FUNCTION</scope>
    <scope>GENE FAMILY</scope>
    <scope>NOMENCLATURE</scope>
</reference>
<name>VQ5_ARATH</name>
<gene>
    <name evidence="4" type="primary">VQ5</name>
    <name evidence="7" type="ordered locus">At1g32585</name>
</gene>
<sequence length="220" mass="25137">MYQRPQNDYLRVNKRKSNYDQLNADSNSVPQLAQTQPRVQVYIIDKNDFKSLVQQLTSPQPCDRLPQNIPKHQDIRPEPINWTSSIPPSAMAVQEDPDVSLYMAYLQSLLEESSGSNGDQFEEPFDKYHSHMMAQSQPQDPTQSMPQSNGFEPFPSSWFNGSTQEMHGASSLQSTRVDYEYPLPLTPNFTFSSMTQHEVFGSDLDSIGPDEDLEFSYEIN</sequence>
<comment type="function">
    <text evidence="6">May function as negative regulator of plant defense.</text>
</comment>
<comment type="subcellular location">
    <subcellularLocation>
        <location evidence="1">Nucleus</location>
    </subcellularLocation>
</comment>
<comment type="miscellaneous">
    <text evidence="3">Plants over-expressing VQ5 display enhanced disease symptoms after infection by the necrotrophic fungal pathogen B.cinerea.</text>
</comment>
<organism>
    <name type="scientific">Arabidopsis thaliana</name>
    <name type="common">Mouse-ear cress</name>
    <dbReference type="NCBI Taxonomy" id="3702"/>
    <lineage>
        <taxon>Eukaryota</taxon>
        <taxon>Viridiplantae</taxon>
        <taxon>Streptophyta</taxon>
        <taxon>Embryophyta</taxon>
        <taxon>Tracheophyta</taxon>
        <taxon>Spermatophyta</taxon>
        <taxon>Magnoliopsida</taxon>
        <taxon>eudicotyledons</taxon>
        <taxon>Gunneridae</taxon>
        <taxon>Pentapetalae</taxon>
        <taxon>rosids</taxon>
        <taxon>malvids</taxon>
        <taxon>Brassicales</taxon>
        <taxon>Brassicaceae</taxon>
        <taxon>Camelineae</taxon>
        <taxon>Arabidopsis</taxon>
    </lineage>
</organism>
<accession>Q3ED38</accession>
<proteinExistence type="inferred from homology"/>
<dbReference type="EMBL" id="AC055769">
    <property type="status" value="NOT_ANNOTATED_CDS"/>
    <property type="molecule type" value="Genomic_DNA"/>
</dbReference>
<dbReference type="EMBL" id="CP002684">
    <property type="protein sequence ID" value="AEE31508.1"/>
    <property type="molecule type" value="Genomic_DNA"/>
</dbReference>
<dbReference type="RefSeq" id="NP_683343.1">
    <property type="nucleotide sequence ID" value="NM_148502.1"/>
</dbReference>
<dbReference type="STRING" id="3702.Q3ED38"/>
<dbReference type="PaxDb" id="3702-AT1G32585.1"/>
<dbReference type="EnsemblPlants" id="AT1G32585.1">
    <property type="protein sequence ID" value="AT1G32585.1"/>
    <property type="gene ID" value="AT1G32585"/>
</dbReference>
<dbReference type="GeneID" id="840153"/>
<dbReference type="Gramene" id="AT1G32585.1">
    <property type="protein sequence ID" value="AT1G32585.1"/>
    <property type="gene ID" value="AT1G32585"/>
</dbReference>
<dbReference type="KEGG" id="ath:AT1G32585"/>
<dbReference type="Araport" id="AT1G32585"/>
<dbReference type="TAIR" id="AT1G32585"/>
<dbReference type="HOGENOM" id="CLU_1257617_0_0_1"/>
<dbReference type="InParanoid" id="Q3ED38"/>
<dbReference type="OMA" id="DENQSHM"/>
<dbReference type="PhylomeDB" id="Q3ED38"/>
<dbReference type="PRO" id="PR:Q3ED38"/>
<dbReference type="Proteomes" id="UP000006548">
    <property type="component" value="Chromosome 1"/>
</dbReference>
<dbReference type="ExpressionAtlas" id="Q3ED38">
    <property type="expression patterns" value="baseline and differential"/>
</dbReference>
<dbReference type="GO" id="GO:0005634">
    <property type="term" value="C:nucleus"/>
    <property type="evidence" value="ECO:0007669"/>
    <property type="project" value="UniProtKB-SubCell"/>
</dbReference>
<dbReference type="GO" id="GO:0006952">
    <property type="term" value="P:defense response"/>
    <property type="evidence" value="ECO:0007669"/>
    <property type="project" value="UniProtKB-KW"/>
</dbReference>
<dbReference type="InterPro" id="IPR039612">
    <property type="entry name" value="VQ_5/9/14"/>
</dbReference>
<dbReference type="PANTHER" id="PTHR33783">
    <property type="entry name" value="PROTEIN HAIKU1"/>
    <property type="match status" value="1"/>
</dbReference>
<dbReference type="PANTHER" id="PTHR33783:SF5">
    <property type="entry name" value="VQ MOTIF-CONTAINING PROTEIN 5"/>
    <property type="match status" value="1"/>
</dbReference>
<protein>
    <recommendedName>
        <fullName evidence="4">VQ motif-containing protein 5</fullName>
        <shortName evidence="4">AtVQ5</shortName>
    </recommendedName>
</protein>
<feature type="chain" id="PRO_0000432309" description="VQ motif-containing protein 5">
    <location>
        <begin position="1"/>
        <end position="220"/>
    </location>
</feature>
<feature type="region of interest" description="Disordered" evidence="2">
    <location>
        <begin position="61"/>
        <end position="80"/>
    </location>
</feature>
<feature type="region of interest" description="Disordered" evidence="2">
    <location>
        <begin position="131"/>
        <end position="171"/>
    </location>
</feature>
<feature type="short sequence motif" description="VQ" evidence="5">
    <location>
        <begin position="49"/>
        <end position="57"/>
    </location>
</feature>
<feature type="compositionally biased region" description="Polar residues" evidence="2">
    <location>
        <begin position="133"/>
        <end position="150"/>
    </location>
</feature>
<feature type="compositionally biased region" description="Polar residues" evidence="2">
    <location>
        <begin position="157"/>
        <end position="171"/>
    </location>
</feature>
<evidence type="ECO:0000250" key="1">
    <source>
        <dbReference type="UniProtKB" id="Q9M9F0"/>
    </source>
</evidence>
<evidence type="ECO:0000256" key="2">
    <source>
        <dbReference type="SAM" id="MobiDB-lite"/>
    </source>
</evidence>
<evidence type="ECO:0000269" key="3">
    <source>
    </source>
</evidence>
<evidence type="ECO:0000303" key="4">
    <source>
    </source>
</evidence>
<evidence type="ECO:0000305" key="5"/>
<evidence type="ECO:0000305" key="6">
    <source>
    </source>
</evidence>
<evidence type="ECO:0000312" key="7">
    <source>
        <dbReference type="Araport" id="AT1G32585"/>
    </source>
</evidence>